<feature type="chain" id="PRO_0000084987" description="Catalase">
    <location>
        <begin position="1"/>
        <end position="505"/>
    </location>
</feature>
<feature type="active site" evidence="2">
    <location>
        <position position="56"/>
    </location>
</feature>
<feature type="active site" evidence="2">
    <location>
        <position position="129"/>
    </location>
</feature>
<feature type="binding site" description="axial binding residue" evidence="1">
    <location>
        <position position="339"/>
    </location>
    <ligand>
        <name>heme</name>
        <dbReference type="ChEBI" id="CHEBI:30413"/>
    </ligand>
    <ligandPart>
        <name>Fe</name>
        <dbReference type="ChEBI" id="CHEBI:18248"/>
    </ligandPart>
</feature>
<feature type="sequence conflict" description="In Ref. 1; AAC16068." evidence="3" ref="1">
    <original>S</original>
    <variation>F</variation>
    <location>
        <position position="82"/>
    </location>
</feature>
<feature type="sequence conflict" description="In Ref. 2; CAA94567." evidence="3" ref="2">
    <original>V</original>
    <variation>I</variation>
    <location>
        <position position="234"/>
    </location>
</feature>
<feature type="sequence conflict" description="In Ref. 2; CAA94567." evidence="3" ref="2">
    <original>Y</original>
    <variation>H</variation>
    <location>
        <position position="237"/>
    </location>
</feature>
<feature type="sequence conflict" description="In Ref. 2; CAA94567." evidence="3" ref="2">
    <original>N</original>
    <variation>D</variation>
    <location>
        <position position="248"/>
    </location>
</feature>
<feature type="sequence conflict" description="In Ref. 2; CAA94567." evidence="3" ref="2">
    <original>F</original>
    <variation>Y</variation>
    <location>
        <position position="255"/>
    </location>
</feature>
<feature type="sequence conflict" description="In Ref. 2; CAA94567." evidence="3" ref="2">
    <original>L</original>
    <variation>T</variation>
    <location>
        <position position="286"/>
    </location>
</feature>
<feature type="sequence conflict" description="In Ref. 1; AAC16068." evidence="3" ref="1">
    <original>A</original>
    <variation>V</variation>
    <location>
        <position position="313"/>
    </location>
</feature>
<feature type="sequence conflict" description="In Ref. 1; AAC16068 and 2; CAA94567." evidence="3" ref="1 2">
    <original>S</original>
    <variation>T</variation>
    <location>
        <position position="316"/>
    </location>
</feature>
<feature type="strand" evidence="4">
    <location>
        <begin position="24"/>
        <end position="26"/>
    </location>
</feature>
<feature type="helix" evidence="4">
    <location>
        <begin position="36"/>
        <end position="45"/>
    </location>
</feature>
<feature type="strand" evidence="4">
    <location>
        <begin position="58"/>
        <end position="68"/>
    </location>
</feature>
<feature type="turn" evidence="4">
    <location>
        <begin position="73"/>
        <end position="75"/>
    </location>
</feature>
<feature type="helix" evidence="4">
    <location>
        <begin position="79"/>
        <end position="81"/>
    </location>
</feature>
<feature type="strand" evidence="4">
    <location>
        <begin position="87"/>
        <end position="95"/>
    </location>
</feature>
<feature type="strand" evidence="4">
    <location>
        <begin position="105"/>
        <end position="109"/>
    </location>
</feature>
<feature type="strand" evidence="4">
    <location>
        <begin position="112"/>
        <end position="119"/>
    </location>
</feature>
<feature type="strand" evidence="4">
    <location>
        <begin position="122"/>
        <end position="132"/>
    </location>
</feature>
<feature type="helix" evidence="4">
    <location>
        <begin position="139"/>
        <end position="141"/>
    </location>
</feature>
<feature type="helix" evidence="4">
    <location>
        <begin position="142"/>
        <end position="149"/>
    </location>
</feature>
<feature type="turn" evidence="4">
    <location>
        <begin position="153"/>
        <end position="155"/>
    </location>
</feature>
<feature type="helix" evidence="4">
    <location>
        <begin position="160"/>
        <end position="169"/>
    </location>
</feature>
<feature type="helix" evidence="4">
    <location>
        <begin position="171"/>
        <end position="173"/>
    </location>
</feature>
<feature type="helix" evidence="4">
    <location>
        <begin position="174"/>
        <end position="181"/>
    </location>
</feature>
<feature type="helix" evidence="4">
    <location>
        <begin position="183"/>
        <end position="185"/>
    </location>
</feature>
<feature type="strand" evidence="4">
    <location>
        <begin position="186"/>
        <end position="189"/>
    </location>
</feature>
<feature type="helix" evidence="4">
    <location>
        <begin position="190"/>
        <end position="192"/>
    </location>
</feature>
<feature type="strand" evidence="4">
    <location>
        <begin position="201"/>
        <end position="204"/>
    </location>
</feature>
<feature type="strand" evidence="4">
    <location>
        <begin position="210"/>
        <end position="219"/>
    </location>
</feature>
<feature type="helix" evidence="4">
    <location>
        <begin position="228"/>
        <end position="235"/>
    </location>
</feature>
<feature type="helix" evidence="4">
    <location>
        <begin position="241"/>
        <end position="251"/>
    </location>
</feature>
<feature type="strand" evidence="4">
    <location>
        <begin position="257"/>
        <end position="266"/>
    </location>
</feature>
<feature type="helix" evidence="4">
    <location>
        <begin position="267"/>
        <end position="269"/>
    </location>
</feature>
<feature type="turn" evidence="4">
    <location>
        <begin position="270"/>
        <end position="272"/>
    </location>
</feature>
<feature type="turn" evidence="4">
    <location>
        <begin position="286"/>
        <end position="288"/>
    </location>
</feature>
<feature type="strand" evidence="4">
    <location>
        <begin position="292"/>
        <end position="301"/>
    </location>
</feature>
<feature type="helix" evidence="4">
    <location>
        <begin position="306"/>
        <end position="309"/>
    </location>
</feature>
<feature type="turn" evidence="4">
    <location>
        <begin position="310"/>
        <end position="312"/>
    </location>
</feature>
<feature type="helix" evidence="4">
    <location>
        <begin position="330"/>
        <end position="347"/>
    </location>
</feature>
<feature type="helix" evidence="4">
    <location>
        <begin position="351"/>
        <end position="353"/>
    </location>
</feature>
<feature type="helix" evidence="4">
    <location>
        <begin position="355"/>
        <end position="357"/>
    </location>
</feature>
<feature type="turn" evidence="4">
    <location>
        <begin position="376"/>
        <end position="379"/>
    </location>
</feature>
<feature type="strand" evidence="4">
    <location>
        <begin position="387"/>
        <end position="389"/>
    </location>
</feature>
<feature type="helix" evidence="4">
    <location>
        <begin position="395"/>
        <end position="397"/>
    </location>
</feature>
<feature type="helix" evidence="4">
    <location>
        <begin position="404"/>
        <end position="406"/>
    </location>
</feature>
<feature type="helix" evidence="4">
    <location>
        <begin position="418"/>
        <end position="421"/>
    </location>
</feature>
<feature type="helix" evidence="4">
    <location>
        <begin position="427"/>
        <end position="435"/>
    </location>
</feature>
<feature type="helix" evidence="4">
    <location>
        <begin position="438"/>
        <end position="452"/>
    </location>
</feature>
<feature type="helix" evidence="4">
    <location>
        <begin position="458"/>
        <end position="471"/>
    </location>
</feature>
<feature type="helix" evidence="4">
    <location>
        <begin position="473"/>
        <end position="489"/>
    </location>
</feature>
<comment type="function">
    <text>Decomposes hydrogen peroxide into water and oxygen; serves to protect cells from the toxic effects of hydrogen peroxide.</text>
</comment>
<comment type="catalytic activity">
    <reaction evidence="2">
        <text>2 H2O2 = O2 + 2 H2O</text>
        <dbReference type="Rhea" id="RHEA:20309"/>
        <dbReference type="ChEBI" id="CHEBI:15377"/>
        <dbReference type="ChEBI" id="CHEBI:15379"/>
        <dbReference type="ChEBI" id="CHEBI:16240"/>
        <dbReference type="EC" id="1.11.1.6"/>
    </reaction>
</comment>
<comment type="cofactor">
    <cofactor>
        <name>heme</name>
        <dbReference type="ChEBI" id="CHEBI:30413"/>
    </cofactor>
</comment>
<comment type="interaction">
    <interactant intactId="EBI-7585674">
        <id>P77872</id>
    </interactant>
    <interactant intactId="EBI-7585664">
        <id>O25542</id>
        <label>HP_0874</label>
    </interactant>
    <organismsDiffer>false</organismsDiffer>
    <experiments>3</experiments>
</comment>
<comment type="subcellular location">
    <subcellularLocation>
        <location evidence="3">Cytoplasm</location>
    </subcellularLocation>
</comment>
<comment type="similarity">
    <text evidence="3">Belongs to the catalase family.</text>
</comment>
<accession>P77872</accession>
<accession>P94823</accession>
<dbReference type="EC" id="1.11.1.6"/>
<dbReference type="EMBL" id="U67458">
    <property type="protein sequence ID" value="AAC16068.1"/>
    <property type="molecule type" value="Genomic_DNA"/>
</dbReference>
<dbReference type="EMBL" id="Z70679">
    <property type="protein sequence ID" value="CAA94567.1"/>
    <property type="molecule type" value="Genomic_DNA"/>
</dbReference>
<dbReference type="EMBL" id="AE000511">
    <property type="protein sequence ID" value="AAD07923.1"/>
    <property type="molecule type" value="Genomic_DNA"/>
</dbReference>
<dbReference type="PIR" id="C64629">
    <property type="entry name" value="C64629"/>
</dbReference>
<dbReference type="RefSeq" id="NP_207669.1">
    <property type="nucleotide sequence ID" value="NC_000915.1"/>
</dbReference>
<dbReference type="RefSeq" id="WP_000247370.1">
    <property type="nucleotide sequence ID" value="NC_018939.1"/>
</dbReference>
<dbReference type="PDB" id="1QWL">
    <property type="method" value="X-ray"/>
    <property type="resolution" value="1.60 A"/>
    <property type="chains" value="A/B=1-505"/>
</dbReference>
<dbReference type="PDB" id="1QWM">
    <property type="method" value="X-ray"/>
    <property type="resolution" value="1.60 A"/>
    <property type="chains" value="A/B=1-505"/>
</dbReference>
<dbReference type="PDB" id="2A9E">
    <property type="method" value="X-ray"/>
    <property type="resolution" value="1.76 A"/>
    <property type="chains" value="A/B=1-505"/>
</dbReference>
<dbReference type="PDB" id="2IQF">
    <property type="method" value="X-ray"/>
    <property type="resolution" value="1.86 A"/>
    <property type="chains" value="A/B=1-505"/>
</dbReference>
<dbReference type="PDBsum" id="1QWL"/>
<dbReference type="PDBsum" id="1QWM"/>
<dbReference type="PDBsum" id="2A9E"/>
<dbReference type="PDBsum" id="2IQF"/>
<dbReference type="SMR" id="P77872"/>
<dbReference type="DIP" id="DIP-3559N"/>
<dbReference type="FunCoup" id="P77872">
    <property type="interactions" value="279"/>
</dbReference>
<dbReference type="IntAct" id="P77872">
    <property type="interactions" value="3"/>
</dbReference>
<dbReference type="MINT" id="P77872"/>
<dbReference type="STRING" id="85962.HP_0875"/>
<dbReference type="DrugBank" id="DB01942">
    <property type="generic name" value="Formic acid"/>
</dbReference>
<dbReference type="MetOSite" id="P77872"/>
<dbReference type="PaxDb" id="85962-C694_04480"/>
<dbReference type="EnsemblBacteria" id="AAD07923">
    <property type="protein sequence ID" value="AAD07923"/>
    <property type="gene ID" value="HP_0875"/>
</dbReference>
<dbReference type="KEGG" id="heo:C694_04480"/>
<dbReference type="KEGG" id="hpy:HP_0875"/>
<dbReference type="PATRIC" id="fig|85962.47.peg.930"/>
<dbReference type="eggNOG" id="COG0753">
    <property type="taxonomic scope" value="Bacteria"/>
</dbReference>
<dbReference type="InParanoid" id="P77872"/>
<dbReference type="OrthoDB" id="3169619at2"/>
<dbReference type="PhylomeDB" id="P77872"/>
<dbReference type="SABIO-RK" id="P77872"/>
<dbReference type="EvolutionaryTrace" id="P77872"/>
<dbReference type="Proteomes" id="UP000000429">
    <property type="component" value="Chromosome"/>
</dbReference>
<dbReference type="GO" id="GO:0005737">
    <property type="term" value="C:cytoplasm"/>
    <property type="evidence" value="ECO:0000318"/>
    <property type="project" value="GO_Central"/>
</dbReference>
<dbReference type="GO" id="GO:0004096">
    <property type="term" value="F:catalase activity"/>
    <property type="evidence" value="ECO:0000318"/>
    <property type="project" value="GO_Central"/>
</dbReference>
<dbReference type="GO" id="GO:0020037">
    <property type="term" value="F:heme binding"/>
    <property type="evidence" value="ECO:0000318"/>
    <property type="project" value="GO_Central"/>
</dbReference>
<dbReference type="GO" id="GO:0046872">
    <property type="term" value="F:metal ion binding"/>
    <property type="evidence" value="ECO:0007669"/>
    <property type="project" value="UniProtKB-KW"/>
</dbReference>
<dbReference type="GO" id="GO:0042744">
    <property type="term" value="P:hydrogen peroxide catabolic process"/>
    <property type="evidence" value="ECO:0000315"/>
    <property type="project" value="CACAO"/>
</dbReference>
<dbReference type="GO" id="GO:0042542">
    <property type="term" value="P:response to hydrogen peroxide"/>
    <property type="evidence" value="ECO:0000318"/>
    <property type="project" value="GO_Central"/>
</dbReference>
<dbReference type="CDD" id="cd08156">
    <property type="entry name" value="catalase_clade_3"/>
    <property type="match status" value="1"/>
</dbReference>
<dbReference type="FunFam" id="2.40.180.10:FF:000001">
    <property type="entry name" value="Catalase"/>
    <property type="match status" value="1"/>
</dbReference>
<dbReference type="Gene3D" id="2.40.180.10">
    <property type="entry name" value="Catalase core domain"/>
    <property type="match status" value="1"/>
</dbReference>
<dbReference type="InterPro" id="IPR018028">
    <property type="entry name" value="Catalase"/>
</dbReference>
<dbReference type="InterPro" id="IPR040333">
    <property type="entry name" value="Catalase_3"/>
</dbReference>
<dbReference type="InterPro" id="IPR024708">
    <property type="entry name" value="Catalase_AS"/>
</dbReference>
<dbReference type="InterPro" id="IPR024711">
    <property type="entry name" value="Catalase_clade1/3"/>
</dbReference>
<dbReference type="InterPro" id="IPR011614">
    <property type="entry name" value="Catalase_core"/>
</dbReference>
<dbReference type="InterPro" id="IPR002226">
    <property type="entry name" value="Catalase_haem_BS"/>
</dbReference>
<dbReference type="InterPro" id="IPR010582">
    <property type="entry name" value="Catalase_immune_responsive"/>
</dbReference>
<dbReference type="InterPro" id="IPR020835">
    <property type="entry name" value="Catalase_sf"/>
</dbReference>
<dbReference type="PANTHER" id="PTHR11465">
    <property type="entry name" value="CATALASE"/>
    <property type="match status" value="1"/>
</dbReference>
<dbReference type="PANTHER" id="PTHR11465:SF61">
    <property type="entry name" value="CATALASE"/>
    <property type="match status" value="1"/>
</dbReference>
<dbReference type="Pfam" id="PF00199">
    <property type="entry name" value="Catalase"/>
    <property type="match status" value="1"/>
</dbReference>
<dbReference type="Pfam" id="PF06628">
    <property type="entry name" value="Catalase-rel"/>
    <property type="match status" value="1"/>
</dbReference>
<dbReference type="PIRSF" id="PIRSF038928">
    <property type="entry name" value="Catalase_clade1-3"/>
    <property type="match status" value="1"/>
</dbReference>
<dbReference type="PRINTS" id="PR00067">
    <property type="entry name" value="CATALASE"/>
</dbReference>
<dbReference type="SMART" id="SM01060">
    <property type="entry name" value="Catalase"/>
    <property type="match status" value="1"/>
</dbReference>
<dbReference type="SUPFAM" id="SSF56634">
    <property type="entry name" value="Heme-dependent catalase-like"/>
    <property type="match status" value="1"/>
</dbReference>
<dbReference type="PROSITE" id="PS00437">
    <property type="entry name" value="CATALASE_1"/>
    <property type="match status" value="1"/>
</dbReference>
<dbReference type="PROSITE" id="PS00438">
    <property type="entry name" value="CATALASE_2"/>
    <property type="match status" value="1"/>
</dbReference>
<dbReference type="PROSITE" id="PS51402">
    <property type="entry name" value="CATALASE_3"/>
    <property type="match status" value="1"/>
</dbReference>
<reference key="1">
    <citation type="journal article" date="1998" name="Helicobacter">
        <title>An investigation of the molecular basis of the spontaneous occurrence of a catalase-negative phenotype in Helicobacter pylori.</title>
        <authorList>
            <person name="Manos J."/>
            <person name="Kolesnikow T."/>
            <person name="Hazell S.L."/>
        </authorList>
    </citation>
    <scope>NUCLEOTIDE SEQUENCE [GENOMIC DNA]</scope>
    <source>
        <strain>RU1</strain>
    </source>
</reference>
<reference key="2">
    <citation type="journal article" date="1996" name="J. Bacteriol.">
        <title>Cloning and genetic characterization of Helicobacter pylori catalase and construction of a catalase-deficient mutant strain.</title>
        <authorList>
            <person name="Odenbreit S."/>
            <person name="Wieland B."/>
            <person name="Haas R."/>
        </authorList>
    </citation>
    <scope>NUCLEOTIDE SEQUENCE [GENOMIC DNA]</scope>
    <source>
        <strain>P1</strain>
    </source>
</reference>
<reference key="3">
    <citation type="journal article" date="1997" name="Nature">
        <title>The complete genome sequence of the gastric pathogen Helicobacter pylori.</title>
        <authorList>
            <person name="Tomb J.-F."/>
            <person name="White O."/>
            <person name="Kerlavage A.R."/>
            <person name="Clayton R.A."/>
            <person name="Sutton G.G."/>
            <person name="Fleischmann R.D."/>
            <person name="Ketchum K.A."/>
            <person name="Klenk H.-P."/>
            <person name="Gill S.R."/>
            <person name="Dougherty B.A."/>
            <person name="Nelson K.E."/>
            <person name="Quackenbush J."/>
            <person name="Zhou L."/>
            <person name="Kirkness E.F."/>
            <person name="Peterson S.N."/>
            <person name="Loftus B.J."/>
            <person name="Richardson D.L."/>
            <person name="Dodson R.J."/>
            <person name="Khalak H.G."/>
            <person name="Glodek A."/>
            <person name="McKenney K."/>
            <person name="FitzGerald L.M."/>
            <person name="Lee N."/>
            <person name="Adams M.D."/>
            <person name="Hickey E.K."/>
            <person name="Berg D.E."/>
            <person name="Gocayne J.D."/>
            <person name="Utterback T.R."/>
            <person name="Peterson J.D."/>
            <person name="Kelley J.M."/>
            <person name="Cotton M.D."/>
            <person name="Weidman J.F."/>
            <person name="Fujii C."/>
            <person name="Bowman C."/>
            <person name="Watthey L."/>
            <person name="Wallin E."/>
            <person name="Hayes W.S."/>
            <person name="Borodovsky M."/>
            <person name="Karp P.D."/>
            <person name="Smith H.O."/>
            <person name="Fraser C.M."/>
            <person name="Venter J.C."/>
        </authorList>
    </citation>
    <scope>NUCLEOTIDE SEQUENCE [LARGE SCALE GENOMIC DNA]</scope>
    <source>
        <strain>ATCC 700392 / 26695</strain>
    </source>
</reference>
<evidence type="ECO:0000250" key="1"/>
<evidence type="ECO:0000255" key="2">
    <source>
        <dbReference type="PROSITE-ProRule" id="PRU10013"/>
    </source>
</evidence>
<evidence type="ECO:0000305" key="3"/>
<evidence type="ECO:0007829" key="4">
    <source>
        <dbReference type="PDB" id="1QWL"/>
    </source>
</evidence>
<gene>
    <name type="primary">katA</name>
    <name type="ordered locus">HP_0875</name>
</gene>
<keyword id="KW-0002">3D-structure</keyword>
<keyword id="KW-0963">Cytoplasm</keyword>
<keyword id="KW-0349">Heme</keyword>
<keyword id="KW-0376">Hydrogen peroxide</keyword>
<keyword id="KW-0408">Iron</keyword>
<keyword id="KW-0479">Metal-binding</keyword>
<keyword id="KW-0560">Oxidoreductase</keyword>
<keyword id="KW-0575">Peroxidase</keyword>
<keyword id="KW-1185">Reference proteome</keyword>
<sequence>MVNKDVKQTTAFGAPVWDDNNVITAGPRGPVLLQSTWFLEKLAAFDRERIPERVVHAKGSGAYGTFTVTKDITKYTKAKIFSKVGKKTECFFRFSTVAGERGSADAVRDPRGFAMKYYTEEGNWDLVGNNTPVFFIRDAIKFPDFIHTQKRDPQTNLPNHDMVWDFWSNVPESLYQVTWVMSDRGIPKSFRHMDGFGSHTFSLINAKGERFWVKFHFHTMQGVKHLTNEEAAEVRKYDPDSNQRDLFNAIARGDFPKWKLSIQVMPEEDAKKYRFHPFDVTKIWYLQDYPLMEVGIVELNKNPENYFAEVEQAAFSPANVVPGIGYSPDRMLQGRLFSYGDTHRYRLGVNYPQIPVNKPRCPFHSSSRDGYMQNGYYGSLQNYTPSSLPGYKEDKSARDPKFNLAHIEKEFEVWNWDYRADDSDYYTQPGDYYRSLPADEKERLHDTIGESLAHVTHKEIVDKQLEHFKKADPKYAEGVKKALEKHQKMMKDMHGKDMHHTKKKK</sequence>
<protein>
    <recommendedName>
        <fullName>Catalase</fullName>
        <ecNumber>1.11.1.6</ecNumber>
    </recommendedName>
</protein>
<proteinExistence type="evidence at protein level"/>
<organism>
    <name type="scientific">Helicobacter pylori (strain ATCC 700392 / 26695)</name>
    <name type="common">Campylobacter pylori</name>
    <dbReference type="NCBI Taxonomy" id="85962"/>
    <lineage>
        <taxon>Bacteria</taxon>
        <taxon>Pseudomonadati</taxon>
        <taxon>Campylobacterota</taxon>
        <taxon>Epsilonproteobacteria</taxon>
        <taxon>Campylobacterales</taxon>
        <taxon>Helicobacteraceae</taxon>
        <taxon>Helicobacter</taxon>
    </lineage>
</organism>
<name>CATA_HELPY</name>